<sequence length="472" mass="51079">MAGGEAGVTLGQPHLSRQDLATLDVTKLTPLSHEVISRQATINIGTIGHVAHGKSTVVKAISGVHTVRFKNELERNITIKLGYANAKIYKLDDPSCPRPECYRSCGSSTPDEFPTDIPGTKGNFKLVRHVSFVDCPGHDILMATMLNGAAVMDAALLLIAGNESCPQPQTSEHLAAIEIMKLKHILILQNKIDLVKESQAKEQYEQILAFVQGTVAEGAPIIPISAQLKYNIEVVCEYIVKKIPVPPRDFTSEPRLIVIRSFDVNKPGCEVDDLKGGVAGGSILKGVLKVGQEIEVRPGIVSKDSEGKLMCKPIFSKIVSLFAEHNDLQYAAPGGLIGVGTKIDPTLCRADRMVGQVLGAVGALPEIFTELEISYFLLRRLLGVRTEGDKKAAKVQKLSKNEVLMVNIGSLSTGGRVSAVKADLGKIVLTNPVCTEVGEKIALSRRVEKHWRLIGWGQIRRGVTIKPTVDDD</sequence>
<reference key="1">
    <citation type="submission" date="2005-09" db="EMBL/GenBank/DDBJ databases">
        <authorList>
            <person name="Mural R.J."/>
            <person name="Adams M.D."/>
            <person name="Myers E.W."/>
            <person name="Smith H.O."/>
            <person name="Venter J.C."/>
        </authorList>
    </citation>
    <scope>NUCLEOTIDE SEQUENCE [LARGE SCALE GENOMIC DNA]</scope>
</reference>
<reference key="2">
    <citation type="journal article" date="2004" name="Genome Res.">
        <title>The status, quality, and expansion of the NIH full-length cDNA project: the Mammalian Gene Collection (MGC).</title>
        <authorList>
            <consortium name="The MGC Project Team"/>
        </authorList>
    </citation>
    <scope>NUCLEOTIDE SEQUENCE [LARGE SCALE MRNA]</scope>
    <source>
        <tissue>Ovary</tissue>
        <tissue>Prostate</tissue>
    </source>
</reference>
<reference key="3">
    <citation type="journal article" date="1996" name="Biochem. Biophys. Res. Commun.">
        <title>Rat liver pp49, a protein that forms complexes with protein kinase CK2, is composed of the beta and the gamma subunits of translation initiation factor eIF-2.</title>
        <authorList>
            <person name="Gil C."/>
            <person name="Plana M."/>
            <person name="Riera M."/>
            <person name="Itarte E."/>
        </authorList>
    </citation>
    <scope>PROTEIN SEQUENCE OF 290-303</scope>
    <source>
        <tissue>Liver</tissue>
    </source>
</reference>
<reference key="4">
    <citation type="journal article" date="1998" name="Hum. Mol. Genet.">
        <title>Characterization of genes encoding translation initiation factor eIF-2gamma in mouse and human: sex chromosome localization, escape from X-inactivation and evolution.</title>
        <authorList>
            <person name="Ehrmann I.E."/>
            <person name="Ellis P.S."/>
            <person name="Mazeyrat S."/>
            <person name="Duthie S."/>
            <person name="Brockdorff N."/>
            <person name="Mattei M.-G."/>
            <person name="Gavin M.A."/>
            <person name="Affara N.A."/>
            <person name="Brown G.M."/>
            <person name="Simpson E."/>
            <person name="Mitchell M.J."/>
            <person name="Scott D.M."/>
        </authorList>
    </citation>
    <scope>IDENTIFICATION OF EIF2S3 HOMOLOGS ON CHROMOSOMES X AND Y</scope>
</reference>
<reference key="5">
    <citation type="journal article" date="2014" name="PLoS ONE">
        <title>The incidence of sexually dimorphic gene expression varies greatly between tissues in the rat.</title>
        <authorList>
            <person name="Huby R.D."/>
            <person name="Glaves P."/>
            <person name="Jackson R."/>
        </authorList>
    </citation>
    <scope>TISSUE SPECIFICITY</scope>
</reference>
<name>IF2G_RAT</name>
<accession>P81795</accession>
<accession>B0BN96</accession>
<accession>B2RYH8</accession>
<accession>Q5BJX8</accession>
<comment type="function">
    <text evidence="1 5">Member of the eIF2 complex that functions in the early steps of protein synthesis by forming a ternary complex with GTP and initiator tRNA. This complex binds to a 40S ribosomal subunit, followed by mRNA binding to form the 43S pre-initiation complex (43S PIC). Junction of the 60S ribosomal subunit to form the 80S initiation complex is preceded by hydrolysis of the GTP bound to eIF2 and release of an eIF2-GDP binary complex. In order for eIF2 to recycle and catalyze another round of initiation, the GDP bound to eIF2 must exchange with GTP by way of a reaction catalyzed by eIF-2B (By similarity). Along with its paralog on chromosome Y, may contribute to spermatogenesis up to the round spermatid stage (By similarity).</text>
</comment>
<comment type="catalytic activity">
    <reaction evidence="2">
        <text>GTP + H2O = GDP + phosphate + H(+)</text>
        <dbReference type="Rhea" id="RHEA:19669"/>
        <dbReference type="ChEBI" id="CHEBI:15377"/>
        <dbReference type="ChEBI" id="CHEBI:15378"/>
        <dbReference type="ChEBI" id="CHEBI:37565"/>
        <dbReference type="ChEBI" id="CHEBI:43474"/>
        <dbReference type="ChEBI" id="CHEBI:58189"/>
        <dbReference type="EC" id="3.6.5.3"/>
    </reaction>
</comment>
<comment type="subunit">
    <text evidence="3">Eukaryotic translation initiation factor 2 eIF2 is a heterotrimeric complex composed of an alpha (EIF2S1), a beta (EIF2S2) and a gamma (EIF2S3) chain. eIF2 is member of the 43S pre-initiation complex (43S PIC). Interacts (via C-terminus) with CDC123; the interaction is direct.</text>
</comment>
<comment type="subcellular location">
    <subcellularLocation>
        <location evidence="4">Cytoplasm</location>
        <location evidence="4">Cytosol</location>
    </subcellularLocation>
</comment>
<comment type="tissue specificity">
    <text evidence="7">Widely expressed.</text>
</comment>
<comment type="miscellaneous">
    <text evidence="8">Has a homolog on chromosome X (Eif2s3x).</text>
</comment>
<comment type="similarity">
    <text evidence="6">Belongs to the TRAFAC class translation factor GTPase superfamily. Classic translation factor GTPase family. EIF2G subfamily.</text>
</comment>
<evidence type="ECO:0000250" key="1">
    <source>
        <dbReference type="UniProtKB" id="P05198"/>
    </source>
</evidence>
<evidence type="ECO:0000250" key="2">
    <source>
        <dbReference type="UniProtKB" id="P32481"/>
    </source>
</evidence>
<evidence type="ECO:0000250" key="3">
    <source>
        <dbReference type="UniProtKB" id="P41091"/>
    </source>
</evidence>
<evidence type="ECO:0000250" key="4">
    <source>
        <dbReference type="UniProtKB" id="Q09130"/>
    </source>
</evidence>
<evidence type="ECO:0000250" key="5">
    <source>
        <dbReference type="UniProtKB" id="Q9Z0N1"/>
    </source>
</evidence>
<evidence type="ECO:0000255" key="6">
    <source>
        <dbReference type="PROSITE-ProRule" id="PRU01059"/>
    </source>
</evidence>
<evidence type="ECO:0000269" key="7">
    <source>
    </source>
</evidence>
<evidence type="ECO:0000269" key="8">
    <source>
    </source>
</evidence>
<organism>
    <name type="scientific">Rattus norvegicus</name>
    <name type="common">Rat</name>
    <dbReference type="NCBI Taxonomy" id="10116"/>
    <lineage>
        <taxon>Eukaryota</taxon>
        <taxon>Metazoa</taxon>
        <taxon>Chordata</taxon>
        <taxon>Craniata</taxon>
        <taxon>Vertebrata</taxon>
        <taxon>Euteleostomi</taxon>
        <taxon>Mammalia</taxon>
        <taxon>Eutheria</taxon>
        <taxon>Euarchontoglires</taxon>
        <taxon>Glires</taxon>
        <taxon>Rodentia</taxon>
        <taxon>Myomorpha</taxon>
        <taxon>Muroidea</taxon>
        <taxon>Muridae</taxon>
        <taxon>Murinae</taxon>
        <taxon>Rattus</taxon>
    </lineage>
</organism>
<gene>
    <name type="primary">Eif2s3</name>
    <name type="synonym">Eif2g</name>
    <name type="synonym">Eif2s3x</name>
</gene>
<keyword id="KW-0007">Acetylation</keyword>
<keyword id="KW-0963">Cytoplasm</keyword>
<keyword id="KW-0903">Direct protein sequencing</keyword>
<keyword id="KW-0342">GTP-binding</keyword>
<keyword id="KW-0378">Hydrolase</keyword>
<keyword id="KW-0396">Initiation factor</keyword>
<keyword id="KW-0547">Nucleotide-binding</keyword>
<keyword id="KW-0597">Phosphoprotein</keyword>
<keyword id="KW-0648">Protein biosynthesis</keyword>
<keyword id="KW-1185">Reference proteome</keyword>
<protein>
    <recommendedName>
        <fullName>Eukaryotic translation initiation factor 2 subunit 3, X-linked</fullName>
        <ecNumber evidence="2">3.6.5.3</ecNumber>
    </recommendedName>
    <alternativeName>
        <fullName>Eukaryotic translation initiation factor 2 subunit gamma, X-linked</fullName>
        <shortName>eIF2-gamma</shortName>
        <shortName>eIF2-gamma X</shortName>
    </alternativeName>
    <alternativeName>
        <fullName>PP42</fullName>
    </alternativeName>
</protein>
<feature type="initiator methionine" description="Removed" evidence="3">
    <location>
        <position position="1"/>
    </location>
</feature>
<feature type="chain" id="PRO_0000137443" description="Eukaryotic translation initiation factor 2 subunit 3, X-linked">
    <location>
        <begin position="2"/>
        <end position="472"/>
    </location>
</feature>
<feature type="domain" description="tr-type G" evidence="6">
    <location>
        <begin position="39"/>
        <end position="248"/>
    </location>
</feature>
<feature type="region of interest" description="G1" evidence="6">
    <location>
        <begin position="48"/>
        <end position="55"/>
    </location>
</feature>
<feature type="region of interest" description="G2" evidence="6">
    <location>
        <begin position="76"/>
        <end position="80"/>
    </location>
</feature>
<feature type="region of interest" description="G3" evidence="6">
    <location>
        <begin position="134"/>
        <end position="137"/>
    </location>
</feature>
<feature type="region of interest" description="G4" evidence="6">
    <location>
        <begin position="190"/>
        <end position="193"/>
    </location>
</feature>
<feature type="region of interest" description="G5" evidence="6">
    <location>
        <begin position="225"/>
        <end position="227"/>
    </location>
</feature>
<feature type="region of interest" description="Interacts with Cdc123" evidence="3">
    <location>
        <begin position="457"/>
        <end position="469"/>
    </location>
</feature>
<feature type="binding site" evidence="2">
    <location>
        <begin position="51"/>
        <end position="56"/>
    </location>
    <ligand>
        <name>GTP</name>
        <dbReference type="ChEBI" id="CHEBI:37565"/>
    </ligand>
</feature>
<feature type="binding site" evidence="2">
    <location>
        <begin position="190"/>
        <end position="193"/>
    </location>
    <ligand>
        <name>GTP</name>
        <dbReference type="ChEBI" id="CHEBI:37565"/>
    </ligand>
</feature>
<feature type="binding site" evidence="2">
    <location>
        <begin position="225"/>
        <end position="227"/>
    </location>
    <ligand>
        <name>GTP</name>
        <dbReference type="ChEBI" id="CHEBI:37565"/>
    </ligand>
</feature>
<feature type="modified residue" description="N-acetylalanine" evidence="3">
    <location>
        <position position="2"/>
    </location>
</feature>
<feature type="modified residue" description="Phosphoserine" evidence="5">
    <location>
        <position position="16"/>
    </location>
</feature>
<proteinExistence type="evidence at protein level"/>
<dbReference type="EC" id="3.6.5.3" evidence="2"/>
<dbReference type="EMBL" id="CH473966">
    <property type="protein sequence ID" value="EDL96007.1"/>
    <property type="molecule type" value="Genomic_DNA"/>
</dbReference>
<dbReference type="EMBL" id="BC091286">
    <property type="protein sequence ID" value="AAH91286.1"/>
    <property type="molecule type" value="mRNA"/>
</dbReference>
<dbReference type="EMBL" id="BC166783">
    <property type="protein sequence ID" value="AAI66783.1"/>
    <property type="molecule type" value="mRNA"/>
</dbReference>
<dbReference type="RefSeq" id="NP_001094012.1">
    <property type="nucleotide sequence ID" value="NM_001100542.1"/>
</dbReference>
<dbReference type="RefSeq" id="XP_063135947.1">
    <property type="nucleotide sequence ID" value="XM_063279877.1"/>
</dbReference>
<dbReference type="SMR" id="P81795"/>
<dbReference type="BioGRID" id="1198220">
    <property type="interactions" value="1"/>
</dbReference>
<dbReference type="BioGRID" id="256094">
    <property type="interactions" value="1"/>
</dbReference>
<dbReference type="FunCoup" id="P81795">
    <property type="interactions" value="3059"/>
</dbReference>
<dbReference type="IntAct" id="P81795">
    <property type="interactions" value="4"/>
</dbReference>
<dbReference type="STRING" id="10116.ENSRNOP00000070817"/>
<dbReference type="iPTMnet" id="P81795"/>
<dbReference type="PhosphoSitePlus" id="P81795"/>
<dbReference type="jPOST" id="P81795"/>
<dbReference type="PaxDb" id="10116-ENSRNOP00000068356"/>
<dbReference type="Ensembl" id="ENSRNOT00000114488.1">
    <property type="protein sequence ID" value="ENSRNOP00000087240.1"/>
    <property type="gene ID" value="ENSRNOG00000060793.2"/>
</dbReference>
<dbReference type="GeneID" id="299027"/>
<dbReference type="KEGG" id="rno:299027"/>
<dbReference type="UCSC" id="RGD:2314438">
    <property type="organism name" value="rat"/>
</dbReference>
<dbReference type="AGR" id="RGD:1561279"/>
<dbReference type="CTD" id="1968"/>
<dbReference type="RGD" id="1561279">
    <property type="gene designation" value="Eif2s3"/>
</dbReference>
<dbReference type="eggNOG" id="KOG0466">
    <property type="taxonomic scope" value="Eukaryota"/>
</dbReference>
<dbReference type="GeneTree" id="ENSGT00550000074801"/>
<dbReference type="HOGENOM" id="CLU_027154_0_1_1"/>
<dbReference type="InParanoid" id="P81795"/>
<dbReference type="OMA" id="NIGMVGH"/>
<dbReference type="OrthoDB" id="8902at9989"/>
<dbReference type="PhylomeDB" id="P81795"/>
<dbReference type="TreeFam" id="TF101513"/>
<dbReference type="Reactome" id="R-RNO-156827">
    <property type="pathway name" value="L13a-mediated translational silencing of Ceruloplasmin expression"/>
</dbReference>
<dbReference type="Reactome" id="R-RNO-381042">
    <property type="pathway name" value="PERK regulates gene expression"/>
</dbReference>
<dbReference type="Reactome" id="R-RNO-382556">
    <property type="pathway name" value="ABC-family proteins mediated transport"/>
</dbReference>
<dbReference type="Reactome" id="R-RNO-72649">
    <property type="pathway name" value="Translation initiation complex formation"/>
</dbReference>
<dbReference type="Reactome" id="R-RNO-72695">
    <property type="pathway name" value="Formation of the ternary complex, and subsequently, the 43S complex"/>
</dbReference>
<dbReference type="Reactome" id="R-RNO-72702">
    <property type="pathway name" value="Ribosomal scanning and start codon recognition"/>
</dbReference>
<dbReference type="Reactome" id="R-RNO-72731">
    <property type="pathway name" value="Recycling of eIF2:GDP"/>
</dbReference>
<dbReference type="Reactome" id="R-RNO-9840373">
    <property type="pathway name" value="Cellular response to mitochondrial stress"/>
</dbReference>
<dbReference type="PRO" id="PR:P81795"/>
<dbReference type="Proteomes" id="UP000002494">
    <property type="component" value="Chromosome X"/>
</dbReference>
<dbReference type="Proteomes" id="UP000234681">
    <property type="component" value="Chromosome x"/>
</dbReference>
<dbReference type="Bgee" id="ENSRNOG00000060793">
    <property type="expression patterns" value="Expressed in spleen and 20 other cell types or tissues"/>
</dbReference>
<dbReference type="ExpressionAtlas" id="P81795">
    <property type="expression patterns" value="baseline and differential"/>
</dbReference>
<dbReference type="GO" id="GO:0005737">
    <property type="term" value="C:cytoplasm"/>
    <property type="evidence" value="ECO:0000266"/>
    <property type="project" value="RGD"/>
</dbReference>
<dbReference type="GO" id="GO:0005829">
    <property type="term" value="C:cytosol"/>
    <property type="evidence" value="ECO:0007669"/>
    <property type="project" value="UniProtKB-SubCell"/>
</dbReference>
<dbReference type="GO" id="GO:0005850">
    <property type="term" value="C:eukaryotic translation initiation factor 2 complex"/>
    <property type="evidence" value="ECO:0000250"/>
    <property type="project" value="UniProtKB"/>
</dbReference>
<dbReference type="GO" id="GO:0045202">
    <property type="term" value="C:synapse"/>
    <property type="evidence" value="ECO:0000266"/>
    <property type="project" value="RGD"/>
</dbReference>
<dbReference type="GO" id="GO:0005525">
    <property type="term" value="F:GTP binding"/>
    <property type="evidence" value="ECO:0007669"/>
    <property type="project" value="UniProtKB-KW"/>
</dbReference>
<dbReference type="GO" id="GO:0003924">
    <property type="term" value="F:GTPase activity"/>
    <property type="evidence" value="ECO:0007669"/>
    <property type="project" value="InterPro"/>
</dbReference>
<dbReference type="GO" id="GO:1990856">
    <property type="term" value="F:methionyl-initiator methionine tRNA binding"/>
    <property type="evidence" value="ECO:0000250"/>
    <property type="project" value="UniProtKB"/>
</dbReference>
<dbReference type="GO" id="GO:0008135">
    <property type="term" value="F:translation factor activity, RNA binding"/>
    <property type="evidence" value="ECO:0000266"/>
    <property type="project" value="RGD"/>
</dbReference>
<dbReference type="GO" id="GO:0003743">
    <property type="term" value="F:translation initiation factor activity"/>
    <property type="evidence" value="ECO:0000266"/>
    <property type="project" value="RGD"/>
</dbReference>
<dbReference type="GO" id="GO:0002183">
    <property type="term" value="P:cytoplasmic translational initiation"/>
    <property type="evidence" value="ECO:0000250"/>
    <property type="project" value="UniProtKB"/>
</dbReference>
<dbReference type="GO" id="GO:0001731">
    <property type="term" value="P:formation of translation preinitiation complex"/>
    <property type="evidence" value="ECO:0000318"/>
    <property type="project" value="GO_Central"/>
</dbReference>
<dbReference type="GO" id="GO:0006413">
    <property type="term" value="P:translational initiation"/>
    <property type="evidence" value="ECO:0000266"/>
    <property type="project" value="RGD"/>
</dbReference>
<dbReference type="CDD" id="cd01888">
    <property type="entry name" value="eIF2_gamma"/>
    <property type="match status" value="1"/>
</dbReference>
<dbReference type="CDD" id="cd03688">
    <property type="entry name" value="eIF2_gamma_II"/>
    <property type="match status" value="1"/>
</dbReference>
<dbReference type="CDD" id="cd15490">
    <property type="entry name" value="eIF2_gamma_III"/>
    <property type="match status" value="1"/>
</dbReference>
<dbReference type="FunFam" id="2.40.30.10:FF:000009">
    <property type="entry name" value="Eukaryotic translation initiation factor 2 subunit gamma"/>
    <property type="match status" value="1"/>
</dbReference>
<dbReference type="FunFam" id="2.40.30.10:FF:000011">
    <property type="entry name" value="Eukaryotic translation initiation factor 2 subunit gamma"/>
    <property type="match status" value="1"/>
</dbReference>
<dbReference type="FunFam" id="3.40.50.300:FF:000065">
    <property type="entry name" value="Eukaryotic translation initiation factor 2 subunit gamma"/>
    <property type="match status" value="1"/>
</dbReference>
<dbReference type="Gene3D" id="3.40.50.300">
    <property type="entry name" value="P-loop containing nucleotide triphosphate hydrolases"/>
    <property type="match status" value="1"/>
</dbReference>
<dbReference type="Gene3D" id="2.40.30.10">
    <property type="entry name" value="Translation factors"/>
    <property type="match status" value="2"/>
</dbReference>
<dbReference type="InterPro" id="IPR004161">
    <property type="entry name" value="EFTu-like_2"/>
</dbReference>
<dbReference type="InterPro" id="IPR050543">
    <property type="entry name" value="eIF2G"/>
</dbReference>
<dbReference type="InterPro" id="IPR015256">
    <property type="entry name" value="eIF2g_C"/>
</dbReference>
<dbReference type="InterPro" id="IPR044127">
    <property type="entry name" value="eIF2g_dom_2"/>
</dbReference>
<dbReference type="InterPro" id="IPR044128">
    <property type="entry name" value="eIF2g_GTP-bd"/>
</dbReference>
<dbReference type="InterPro" id="IPR027417">
    <property type="entry name" value="P-loop_NTPase"/>
</dbReference>
<dbReference type="InterPro" id="IPR000795">
    <property type="entry name" value="T_Tr_GTP-bd_dom"/>
</dbReference>
<dbReference type="InterPro" id="IPR009000">
    <property type="entry name" value="Transl_B-barrel_sf"/>
</dbReference>
<dbReference type="InterPro" id="IPR009001">
    <property type="entry name" value="Transl_elong_EF1A/Init_IF2_C"/>
</dbReference>
<dbReference type="NCBIfam" id="NF003077">
    <property type="entry name" value="PRK04000.1"/>
    <property type="match status" value="1"/>
</dbReference>
<dbReference type="PANTHER" id="PTHR42854">
    <property type="entry name" value="EUKARYOTIC TRANSLATION INITIATION FACTOR 2 SUBUNIT 3 FAMILY MEMBER"/>
    <property type="match status" value="1"/>
</dbReference>
<dbReference type="PANTHER" id="PTHR42854:SF3">
    <property type="entry name" value="EUKARYOTIC TRANSLATION INITIATION FACTOR 2 SUBUNIT 3-RELATED"/>
    <property type="match status" value="1"/>
</dbReference>
<dbReference type="Pfam" id="PF09173">
    <property type="entry name" value="eIF2_C"/>
    <property type="match status" value="1"/>
</dbReference>
<dbReference type="Pfam" id="PF00009">
    <property type="entry name" value="GTP_EFTU"/>
    <property type="match status" value="1"/>
</dbReference>
<dbReference type="Pfam" id="PF03144">
    <property type="entry name" value="GTP_EFTU_D2"/>
    <property type="match status" value="1"/>
</dbReference>
<dbReference type="PRINTS" id="PR00315">
    <property type="entry name" value="ELONGATNFCT"/>
</dbReference>
<dbReference type="SUPFAM" id="SSF50465">
    <property type="entry name" value="EF-Tu/eEF-1alpha/eIF2-gamma C-terminal domain"/>
    <property type="match status" value="1"/>
</dbReference>
<dbReference type="SUPFAM" id="SSF52540">
    <property type="entry name" value="P-loop containing nucleoside triphosphate hydrolases"/>
    <property type="match status" value="1"/>
</dbReference>
<dbReference type="SUPFAM" id="SSF50447">
    <property type="entry name" value="Translation proteins"/>
    <property type="match status" value="1"/>
</dbReference>
<dbReference type="PROSITE" id="PS51722">
    <property type="entry name" value="G_TR_2"/>
    <property type="match status" value="1"/>
</dbReference>